<feature type="chain" id="PRO_1000115912" description="Enolase">
    <location>
        <begin position="1"/>
        <end position="432"/>
    </location>
</feature>
<feature type="active site" description="Proton donor" evidence="1">
    <location>
        <position position="209"/>
    </location>
</feature>
<feature type="active site" description="Proton acceptor" evidence="1">
    <location>
        <position position="342"/>
    </location>
</feature>
<feature type="binding site" evidence="1">
    <location>
        <position position="167"/>
    </location>
    <ligand>
        <name>(2R)-2-phosphoglycerate</name>
        <dbReference type="ChEBI" id="CHEBI:58289"/>
    </ligand>
</feature>
<feature type="binding site" evidence="1">
    <location>
        <position position="246"/>
    </location>
    <ligand>
        <name>Mg(2+)</name>
        <dbReference type="ChEBI" id="CHEBI:18420"/>
    </ligand>
</feature>
<feature type="binding site" evidence="1">
    <location>
        <position position="290"/>
    </location>
    <ligand>
        <name>Mg(2+)</name>
        <dbReference type="ChEBI" id="CHEBI:18420"/>
    </ligand>
</feature>
<feature type="binding site" evidence="1">
    <location>
        <position position="317"/>
    </location>
    <ligand>
        <name>Mg(2+)</name>
        <dbReference type="ChEBI" id="CHEBI:18420"/>
    </ligand>
</feature>
<feature type="binding site" evidence="1">
    <location>
        <position position="342"/>
    </location>
    <ligand>
        <name>(2R)-2-phosphoglycerate</name>
        <dbReference type="ChEBI" id="CHEBI:58289"/>
    </ligand>
</feature>
<feature type="binding site" evidence="1">
    <location>
        <position position="371"/>
    </location>
    <ligand>
        <name>(2R)-2-phosphoglycerate</name>
        <dbReference type="ChEBI" id="CHEBI:58289"/>
    </ligand>
</feature>
<feature type="binding site" evidence="1">
    <location>
        <position position="372"/>
    </location>
    <ligand>
        <name>(2R)-2-phosphoglycerate</name>
        <dbReference type="ChEBI" id="CHEBI:58289"/>
    </ligand>
</feature>
<feature type="binding site" evidence="1">
    <location>
        <position position="393"/>
    </location>
    <ligand>
        <name>(2R)-2-phosphoglycerate</name>
        <dbReference type="ChEBI" id="CHEBI:58289"/>
    </ligand>
</feature>
<evidence type="ECO:0000255" key="1">
    <source>
        <dbReference type="HAMAP-Rule" id="MF_00318"/>
    </source>
</evidence>
<gene>
    <name evidence="1" type="primary">eno</name>
    <name type="ordered locus">SSPA2616</name>
</gene>
<sequence>MSKIVKVIGREIIDSRGNPTVEAEVHLEGGFVGMAAAPSGASTGSREALELRDGDKSRFLGKGVTKAVGAVNGPIAQAILGKDAKDQAGIDKIMIDLDGTENKSNFGANAILAVSLANAKAAAAAKGMPLYEHIAELNGTPGKYSMPVPMMNIINGGEHADNNVDIQEFMIQPVGAKTVKEAIRMGSEVFHHLAKVLKGKGMNTAVGDEGGYAPNLGSNAEALAVIAEAVKAAGYELGKDITLAMDCAASEFYKDGKYVLAGEGNKAFTSEEFTHFLEELTKQYPIVSIEDGLDESDWDGFAYQTKVLGDKIQLVGDDLFVTNTKILKEGIEKGIANSILIKFNQIGSLTETLAAIKMAKDAGYTAVISHRSGETEDATIADLAVGTAAGQIKTGSMSRSDRVAKYNQLIRIEEALGEKAPYNGRKEIKGQA</sequence>
<comment type="function">
    <text evidence="1">Catalyzes the reversible conversion of 2-phosphoglycerate (2-PG) into phosphoenolpyruvate (PEP). It is essential for the degradation of carbohydrates via glycolysis.</text>
</comment>
<comment type="catalytic activity">
    <reaction evidence="1">
        <text>(2R)-2-phosphoglycerate = phosphoenolpyruvate + H2O</text>
        <dbReference type="Rhea" id="RHEA:10164"/>
        <dbReference type="ChEBI" id="CHEBI:15377"/>
        <dbReference type="ChEBI" id="CHEBI:58289"/>
        <dbReference type="ChEBI" id="CHEBI:58702"/>
        <dbReference type="EC" id="4.2.1.11"/>
    </reaction>
</comment>
<comment type="cofactor">
    <cofactor evidence="1">
        <name>Mg(2+)</name>
        <dbReference type="ChEBI" id="CHEBI:18420"/>
    </cofactor>
    <text evidence="1">Binds a second Mg(2+) ion via substrate during catalysis.</text>
</comment>
<comment type="pathway">
    <text evidence="1">Carbohydrate degradation; glycolysis; pyruvate from D-glyceraldehyde 3-phosphate: step 4/5.</text>
</comment>
<comment type="subunit">
    <text evidence="1">Component of the RNA degradosome, a multiprotein complex involved in RNA processing and mRNA degradation.</text>
</comment>
<comment type="subcellular location">
    <subcellularLocation>
        <location evidence="1">Cytoplasm</location>
    </subcellularLocation>
    <subcellularLocation>
        <location evidence="1">Secreted</location>
    </subcellularLocation>
    <subcellularLocation>
        <location evidence="1">Cell surface</location>
    </subcellularLocation>
    <text evidence="1">Fractions of enolase are present in both the cytoplasm and on the cell surface.</text>
</comment>
<comment type="similarity">
    <text evidence="1">Belongs to the enolase family.</text>
</comment>
<organism>
    <name type="scientific">Salmonella paratyphi A (strain AKU_12601)</name>
    <dbReference type="NCBI Taxonomy" id="554290"/>
    <lineage>
        <taxon>Bacteria</taxon>
        <taxon>Pseudomonadati</taxon>
        <taxon>Pseudomonadota</taxon>
        <taxon>Gammaproteobacteria</taxon>
        <taxon>Enterobacterales</taxon>
        <taxon>Enterobacteriaceae</taxon>
        <taxon>Salmonella</taxon>
    </lineage>
</organism>
<keyword id="KW-0963">Cytoplasm</keyword>
<keyword id="KW-0324">Glycolysis</keyword>
<keyword id="KW-0456">Lyase</keyword>
<keyword id="KW-0460">Magnesium</keyword>
<keyword id="KW-0479">Metal-binding</keyword>
<keyword id="KW-0964">Secreted</keyword>
<reference key="1">
    <citation type="journal article" date="2009" name="BMC Genomics">
        <title>Pseudogene accumulation in the evolutionary histories of Salmonella enterica serovars Paratyphi A and Typhi.</title>
        <authorList>
            <person name="Holt K.E."/>
            <person name="Thomson N.R."/>
            <person name="Wain J."/>
            <person name="Langridge G.C."/>
            <person name="Hasan R."/>
            <person name="Bhutta Z.A."/>
            <person name="Quail M.A."/>
            <person name="Norbertczak H."/>
            <person name="Walker D."/>
            <person name="Simmonds M."/>
            <person name="White B."/>
            <person name="Bason N."/>
            <person name="Mungall K."/>
            <person name="Dougan G."/>
            <person name="Parkhill J."/>
        </authorList>
    </citation>
    <scope>NUCLEOTIDE SEQUENCE [LARGE SCALE GENOMIC DNA]</scope>
    <source>
        <strain>AKU_12601</strain>
    </source>
</reference>
<name>ENO_SALPK</name>
<proteinExistence type="inferred from homology"/>
<accession>B5BF02</accession>
<dbReference type="EC" id="4.2.1.11" evidence="1"/>
<dbReference type="EMBL" id="FM200053">
    <property type="protein sequence ID" value="CAR60858.1"/>
    <property type="molecule type" value="Genomic_DNA"/>
</dbReference>
<dbReference type="RefSeq" id="WP_000036734.1">
    <property type="nucleotide sequence ID" value="NC_011147.1"/>
</dbReference>
<dbReference type="SMR" id="B5BF02"/>
<dbReference type="GeneID" id="66757270"/>
<dbReference type="KEGG" id="sek:SSPA2616"/>
<dbReference type="HOGENOM" id="CLU_031223_2_1_6"/>
<dbReference type="UniPathway" id="UPA00109">
    <property type="reaction ID" value="UER00187"/>
</dbReference>
<dbReference type="Proteomes" id="UP000001869">
    <property type="component" value="Chromosome"/>
</dbReference>
<dbReference type="GO" id="GO:0009986">
    <property type="term" value="C:cell surface"/>
    <property type="evidence" value="ECO:0007669"/>
    <property type="project" value="UniProtKB-SubCell"/>
</dbReference>
<dbReference type="GO" id="GO:0005576">
    <property type="term" value="C:extracellular region"/>
    <property type="evidence" value="ECO:0007669"/>
    <property type="project" value="UniProtKB-SubCell"/>
</dbReference>
<dbReference type="GO" id="GO:0000015">
    <property type="term" value="C:phosphopyruvate hydratase complex"/>
    <property type="evidence" value="ECO:0007669"/>
    <property type="project" value="InterPro"/>
</dbReference>
<dbReference type="GO" id="GO:0000287">
    <property type="term" value="F:magnesium ion binding"/>
    <property type="evidence" value="ECO:0007669"/>
    <property type="project" value="UniProtKB-UniRule"/>
</dbReference>
<dbReference type="GO" id="GO:0004634">
    <property type="term" value="F:phosphopyruvate hydratase activity"/>
    <property type="evidence" value="ECO:0007669"/>
    <property type="project" value="UniProtKB-UniRule"/>
</dbReference>
<dbReference type="GO" id="GO:0006096">
    <property type="term" value="P:glycolytic process"/>
    <property type="evidence" value="ECO:0007669"/>
    <property type="project" value="UniProtKB-UniRule"/>
</dbReference>
<dbReference type="CDD" id="cd03313">
    <property type="entry name" value="enolase"/>
    <property type="match status" value="1"/>
</dbReference>
<dbReference type="FunFam" id="3.20.20.120:FF:000001">
    <property type="entry name" value="Enolase"/>
    <property type="match status" value="1"/>
</dbReference>
<dbReference type="FunFam" id="3.30.390.10:FF:000001">
    <property type="entry name" value="Enolase"/>
    <property type="match status" value="1"/>
</dbReference>
<dbReference type="Gene3D" id="3.20.20.120">
    <property type="entry name" value="Enolase-like C-terminal domain"/>
    <property type="match status" value="1"/>
</dbReference>
<dbReference type="Gene3D" id="3.30.390.10">
    <property type="entry name" value="Enolase-like, N-terminal domain"/>
    <property type="match status" value="1"/>
</dbReference>
<dbReference type="HAMAP" id="MF_00318">
    <property type="entry name" value="Enolase"/>
    <property type="match status" value="1"/>
</dbReference>
<dbReference type="InterPro" id="IPR000941">
    <property type="entry name" value="Enolase"/>
</dbReference>
<dbReference type="InterPro" id="IPR036849">
    <property type="entry name" value="Enolase-like_C_sf"/>
</dbReference>
<dbReference type="InterPro" id="IPR029017">
    <property type="entry name" value="Enolase-like_N"/>
</dbReference>
<dbReference type="InterPro" id="IPR020810">
    <property type="entry name" value="Enolase_C"/>
</dbReference>
<dbReference type="InterPro" id="IPR020809">
    <property type="entry name" value="Enolase_CS"/>
</dbReference>
<dbReference type="InterPro" id="IPR020811">
    <property type="entry name" value="Enolase_N"/>
</dbReference>
<dbReference type="NCBIfam" id="TIGR01060">
    <property type="entry name" value="eno"/>
    <property type="match status" value="1"/>
</dbReference>
<dbReference type="PANTHER" id="PTHR11902">
    <property type="entry name" value="ENOLASE"/>
    <property type="match status" value="1"/>
</dbReference>
<dbReference type="PANTHER" id="PTHR11902:SF1">
    <property type="entry name" value="ENOLASE"/>
    <property type="match status" value="1"/>
</dbReference>
<dbReference type="Pfam" id="PF00113">
    <property type="entry name" value="Enolase_C"/>
    <property type="match status" value="1"/>
</dbReference>
<dbReference type="Pfam" id="PF03952">
    <property type="entry name" value="Enolase_N"/>
    <property type="match status" value="1"/>
</dbReference>
<dbReference type="PIRSF" id="PIRSF001400">
    <property type="entry name" value="Enolase"/>
    <property type="match status" value="1"/>
</dbReference>
<dbReference type="PRINTS" id="PR00148">
    <property type="entry name" value="ENOLASE"/>
</dbReference>
<dbReference type="SFLD" id="SFLDF00002">
    <property type="entry name" value="enolase"/>
    <property type="match status" value="1"/>
</dbReference>
<dbReference type="SFLD" id="SFLDG00178">
    <property type="entry name" value="enolase"/>
    <property type="match status" value="1"/>
</dbReference>
<dbReference type="SMART" id="SM01192">
    <property type="entry name" value="Enolase_C"/>
    <property type="match status" value="1"/>
</dbReference>
<dbReference type="SMART" id="SM01193">
    <property type="entry name" value="Enolase_N"/>
    <property type="match status" value="1"/>
</dbReference>
<dbReference type="SUPFAM" id="SSF51604">
    <property type="entry name" value="Enolase C-terminal domain-like"/>
    <property type="match status" value="1"/>
</dbReference>
<dbReference type="SUPFAM" id="SSF54826">
    <property type="entry name" value="Enolase N-terminal domain-like"/>
    <property type="match status" value="1"/>
</dbReference>
<dbReference type="PROSITE" id="PS00164">
    <property type="entry name" value="ENOLASE"/>
    <property type="match status" value="1"/>
</dbReference>
<protein>
    <recommendedName>
        <fullName evidence="1">Enolase</fullName>
        <ecNumber evidence="1">4.2.1.11</ecNumber>
    </recommendedName>
    <alternativeName>
        <fullName evidence="1">2-phospho-D-glycerate hydro-lyase</fullName>
    </alternativeName>
    <alternativeName>
        <fullName evidence="1">2-phosphoglycerate dehydratase</fullName>
    </alternativeName>
</protein>